<reference key="1">
    <citation type="journal article" date="2005" name="Nat. Biotechnol.">
        <title>The complete genome sequence of the meat-borne lactic acid bacterium Lactobacillus sakei 23K.</title>
        <authorList>
            <person name="Chaillou S."/>
            <person name="Champomier-Verges M.-C."/>
            <person name="Cornet M."/>
            <person name="Crutz-Le Coq A.-M."/>
            <person name="Dudez A.-M."/>
            <person name="Martin V."/>
            <person name="Beaufils S."/>
            <person name="Darbon-Rongere E."/>
            <person name="Bossy R."/>
            <person name="Loux V."/>
            <person name="Zagorec M."/>
        </authorList>
    </citation>
    <scope>NUCLEOTIDE SEQUENCE [LARGE SCALE GENOMIC DNA]</scope>
    <source>
        <strain>23K</strain>
    </source>
</reference>
<keyword id="KW-0067">ATP-binding</keyword>
<keyword id="KW-0173">Coenzyme A biosynthesis</keyword>
<keyword id="KW-0963">Cytoplasm</keyword>
<keyword id="KW-0460">Magnesium</keyword>
<keyword id="KW-0547">Nucleotide-binding</keyword>
<keyword id="KW-0548">Nucleotidyltransferase</keyword>
<keyword id="KW-1185">Reference proteome</keyword>
<keyword id="KW-0808">Transferase</keyword>
<accession>Q38WQ7</accession>
<feature type="chain" id="PRO_1000058166" description="Phosphopantetheine adenylyltransferase">
    <location>
        <begin position="1"/>
        <end position="165"/>
    </location>
</feature>
<feature type="binding site" evidence="1">
    <location>
        <begin position="11"/>
        <end position="12"/>
    </location>
    <ligand>
        <name>ATP</name>
        <dbReference type="ChEBI" id="CHEBI:30616"/>
    </ligand>
</feature>
<feature type="binding site" evidence="1">
    <location>
        <position position="11"/>
    </location>
    <ligand>
        <name>substrate</name>
    </ligand>
</feature>
<feature type="binding site" evidence="1">
    <location>
        <position position="19"/>
    </location>
    <ligand>
        <name>ATP</name>
        <dbReference type="ChEBI" id="CHEBI:30616"/>
    </ligand>
</feature>
<feature type="binding site" evidence="1">
    <location>
        <position position="43"/>
    </location>
    <ligand>
        <name>substrate</name>
    </ligand>
</feature>
<feature type="binding site" evidence="1">
    <location>
        <position position="76"/>
    </location>
    <ligand>
        <name>substrate</name>
    </ligand>
</feature>
<feature type="binding site" evidence="1">
    <location>
        <position position="90"/>
    </location>
    <ligand>
        <name>substrate</name>
    </ligand>
</feature>
<feature type="binding site" evidence="1">
    <location>
        <begin position="91"/>
        <end position="93"/>
    </location>
    <ligand>
        <name>ATP</name>
        <dbReference type="ChEBI" id="CHEBI:30616"/>
    </ligand>
</feature>
<feature type="binding site" evidence="1">
    <location>
        <position position="101"/>
    </location>
    <ligand>
        <name>ATP</name>
        <dbReference type="ChEBI" id="CHEBI:30616"/>
    </ligand>
</feature>
<feature type="binding site" evidence="1">
    <location>
        <begin position="126"/>
        <end position="132"/>
    </location>
    <ligand>
        <name>ATP</name>
        <dbReference type="ChEBI" id="CHEBI:30616"/>
    </ligand>
</feature>
<feature type="site" description="Transition state stabilizer" evidence="1">
    <location>
        <position position="19"/>
    </location>
</feature>
<sequence>MTERIALFPGSFDPFTKGHLDTVERASRLFDRVIIAVMTNAAKKPLFDGPTKVALIETVIADLDNVSVVAQPKTLTANFAQAVGARYLIRGIRNANDFEYERDIAALNQTQDAQLETVLLLAKQEFSFISSSMVKEIAAFGGQVDQLVPPAVAVALQEKLKHGRD</sequence>
<organism>
    <name type="scientific">Latilactobacillus sakei subsp. sakei (strain 23K)</name>
    <name type="common">Lactobacillus sakei subsp. sakei</name>
    <dbReference type="NCBI Taxonomy" id="314315"/>
    <lineage>
        <taxon>Bacteria</taxon>
        <taxon>Bacillati</taxon>
        <taxon>Bacillota</taxon>
        <taxon>Bacilli</taxon>
        <taxon>Lactobacillales</taxon>
        <taxon>Lactobacillaceae</taxon>
        <taxon>Latilactobacillus</taxon>
    </lineage>
</organism>
<dbReference type="EC" id="2.7.7.3" evidence="1"/>
<dbReference type="EMBL" id="CR936503">
    <property type="protein sequence ID" value="CAI55374.1"/>
    <property type="molecule type" value="Genomic_DNA"/>
</dbReference>
<dbReference type="RefSeq" id="WP_011374773.1">
    <property type="nucleotide sequence ID" value="NC_007576.1"/>
</dbReference>
<dbReference type="SMR" id="Q38WQ7"/>
<dbReference type="STRING" id="314315.LCA_1073"/>
<dbReference type="KEGG" id="lsa:LCA_1073"/>
<dbReference type="eggNOG" id="COG0669">
    <property type="taxonomic scope" value="Bacteria"/>
</dbReference>
<dbReference type="HOGENOM" id="CLU_100149_0_1_9"/>
<dbReference type="OrthoDB" id="9806661at2"/>
<dbReference type="UniPathway" id="UPA00241">
    <property type="reaction ID" value="UER00355"/>
</dbReference>
<dbReference type="Proteomes" id="UP000002707">
    <property type="component" value="Chromosome"/>
</dbReference>
<dbReference type="GO" id="GO:0005737">
    <property type="term" value="C:cytoplasm"/>
    <property type="evidence" value="ECO:0007669"/>
    <property type="project" value="UniProtKB-SubCell"/>
</dbReference>
<dbReference type="GO" id="GO:0005524">
    <property type="term" value="F:ATP binding"/>
    <property type="evidence" value="ECO:0007669"/>
    <property type="project" value="UniProtKB-KW"/>
</dbReference>
<dbReference type="GO" id="GO:0004595">
    <property type="term" value="F:pantetheine-phosphate adenylyltransferase activity"/>
    <property type="evidence" value="ECO:0007669"/>
    <property type="project" value="UniProtKB-UniRule"/>
</dbReference>
<dbReference type="GO" id="GO:0015937">
    <property type="term" value="P:coenzyme A biosynthetic process"/>
    <property type="evidence" value="ECO:0007669"/>
    <property type="project" value="UniProtKB-UniRule"/>
</dbReference>
<dbReference type="CDD" id="cd02163">
    <property type="entry name" value="PPAT"/>
    <property type="match status" value="1"/>
</dbReference>
<dbReference type="Gene3D" id="3.40.50.620">
    <property type="entry name" value="HUPs"/>
    <property type="match status" value="1"/>
</dbReference>
<dbReference type="HAMAP" id="MF_00151">
    <property type="entry name" value="PPAT_bact"/>
    <property type="match status" value="1"/>
</dbReference>
<dbReference type="InterPro" id="IPR004821">
    <property type="entry name" value="Cyt_trans-like"/>
</dbReference>
<dbReference type="InterPro" id="IPR001980">
    <property type="entry name" value="PPAT"/>
</dbReference>
<dbReference type="InterPro" id="IPR014729">
    <property type="entry name" value="Rossmann-like_a/b/a_fold"/>
</dbReference>
<dbReference type="NCBIfam" id="TIGR01510">
    <property type="entry name" value="coaD_prev_kdtB"/>
    <property type="match status" value="1"/>
</dbReference>
<dbReference type="NCBIfam" id="TIGR00125">
    <property type="entry name" value="cyt_tran_rel"/>
    <property type="match status" value="1"/>
</dbReference>
<dbReference type="PANTHER" id="PTHR21342">
    <property type="entry name" value="PHOSPHOPANTETHEINE ADENYLYLTRANSFERASE"/>
    <property type="match status" value="1"/>
</dbReference>
<dbReference type="PANTHER" id="PTHR21342:SF1">
    <property type="entry name" value="PHOSPHOPANTETHEINE ADENYLYLTRANSFERASE"/>
    <property type="match status" value="1"/>
</dbReference>
<dbReference type="Pfam" id="PF01467">
    <property type="entry name" value="CTP_transf_like"/>
    <property type="match status" value="1"/>
</dbReference>
<dbReference type="PRINTS" id="PR01020">
    <property type="entry name" value="LPSBIOSNTHSS"/>
</dbReference>
<dbReference type="SUPFAM" id="SSF52374">
    <property type="entry name" value="Nucleotidylyl transferase"/>
    <property type="match status" value="1"/>
</dbReference>
<comment type="function">
    <text evidence="1">Reversibly transfers an adenylyl group from ATP to 4'-phosphopantetheine, yielding dephospho-CoA (dPCoA) and pyrophosphate.</text>
</comment>
<comment type="catalytic activity">
    <reaction evidence="1">
        <text>(R)-4'-phosphopantetheine + ATP + H(+) = 3'-dephospho-CoA + diphosphate</text>
        <dbReference type="Rhea" id="RHEA:19801"/>
        <dbReference type="ChEBI" id="CHEBI:15378"/>
        <dbReference type="ChEBI" id="CHEBI:30616"/>
        <dbReference type="ChEBI" id="CHEBI:33019"/>
        <dbReference type="ChEBI" id="CHEBI:57328"/>
        <dbReference type="ChEBI" id="CHEBI:61723"/>
        <dbReference type="EC" id="2.7.7.3"/>
    </reaction>
</comment>
<comment type="cofactor">
    <cofactor evidence="1">
        <name>Mg(2+)</name>
        <dbReference type="ChEBI" id="CHEBI:18420"/>
    </cofactor>
</comment>
<comment type="pathway">
    <text evidence="1">Cofactor biosynthesis; coenzyme A biosynthesis; CoA from (R)-pantothenate: step 4/5.</text>
</comment>
<comment type="subunit">
    <text evidence="1">Homohexamer.</text>
</comment>
<comment type="subcellular location">
    <subcellularLocation>
        <location evidence="1">Cytoplasm</location>
    </subcellularLocation>
</comment>
<comment type="similarity">
    <text evidence="1">Belongs to the bacterial CoaD family.</text>
</comment>
<evidence type="ECO:0000255" key="1">
    <source>
        <dbReference type="HAMAP-Rule" id="MF_00151"/>
    </source>
</evidence>
<gene>
    <name evidence="1" type="primary">coaD</name>
    <name type="ordered locus">LCA_1073</name>
</gene>
<name>COAD_LATSS</name>
<protein>
    <recommendedName>
        <fullName evidence="1">Phosphopantetheine adenylyltransferase</fullName>
        <ecNumber evidence="1">2.7.7.3</ecNumber>
    </recommendedName>
    <alternativeName>
        <fullName evidence="1">Dephospho-CoA pyrophosphorylase</fullName>
    </alternativeName>
    <alternativeName>
        <fullName evidence="1">Pantetheine-phosphate adenylyltransferase</fullName>
        <shortName evidence="1">PPAT</shortName>
    </alternativeName>
</protein>
<proteinExistence type="inferred from homology"/>